<accession>Q4FTX2</accession>
<name>PURA_PSYA2</name>
<dbReference type="EC" id="6.3.4.4" evidence="1"/>
<dbReference type="EMBL" id="CP000082">
    <property type="protein sequence ID" value="AAZ18536.1"/>
    <property type="molecule type" value="Genomic_DNA"/>
</dbReference>
<dbReference type="RefSeq" id="WP_011279963.1">
    <property type="nucleotide sequence ID" value="NC_007204.1"/>
</dbReference>
<dbReference type="SMR" id="Q4FTX2"/>
<dbReference type="STRING" id="259536.Psyc_0677"/>
<dbReference type="KEGG" id="par:Psyc_0677"/>
<dbReference type="eggNOG" id="COG0104">
    <property type="taxonomic scope" value="Bacteria"/>
</dbReference>
<dbReference type="HOGENOM" id="CLU_029848_0_0_6"/>
<dbReference type="OrthoDB" id="9807553at2"/>
<dbReference type="UniPathway" id="UPA00075">
    <property type="reaction ID" value="UER00335"/>
</dbReference>
<dbReference type="Proteomes" id="UP000000546">
    <property type="component" value="Chromosome"/>
</dbReference>
<dbReference type="GO" id="GO:0005737">
    <property type="term" value="C:cytoplasm"/>
    <property type="evidence" value="ECO:0007669"/>
    <property type="project" value="UniProtKB-SubCell"/>
</dbReference>
<dbReference type="GO" id="GO:0004019">
    <property type="term" value="F:adenylosuccinate synthase activity"/>
    <property type="evidence" value="ECO:0007669"/>
    <property type="project" value="UniProtKB-UniRule"/>
</dbReference>
<dbReference type="GO" id="GO:0005525">
    <property type="term" value="F:GTP binding"/>
    <property type="evidence" value="ECO:0007669"/>
    <property type="project" value="UniProtKB-UniRule"/>
</dbReference>
<dbReference type="GO" id="GO:0000287">
    <property type="term" value="F:magnesium ion binding"/>
    <property type="evidence" value="ECO:0007669"/>
    <property type="project" value="UniProtKB-UniRule"/>
</dbReference>
<dbReference type="GO" id="GO:0044208">
    <property type="term" value="P:'de novo' AMP biosynthetic process"/>
    <property type="evidence" value="ECO:0007669"/>
    <property type="project" value="UniProtKB-UniRule"/>
</dbReference>
<dbReference type="GO" id="GO:0046040">
    <property type="term" value="P:IMP metabolic process"/>
    <property type="evidence" value="ECO:0007669"/>
    <property type="project" value="TreeGrafter"/>
</dbReference>
<dbReference type="CDD" id="cd03108">
    <property type="entry name" value="AdSS"/>
    <property type="match status" value="1"/>
</dbReference>
<dbReference type="FunFam" id="1.10.300.10:FF:000001">
    <property type="entry name" value="Adenylosuccinate synthetase"/>
    <property type="match status" value="1"/>
</dbReference>
<dbReference type="FunFam" id="3.90.170.10:FF:000001">
    <property type="entry name" value="Adenylosuccinate synthetase"/>
    <property type="match status" value="1"/>
</dbReference>
<dbReference type="Gene3D" id="3.40.440.10">
    <property type="entry name" value="Adenylosuccinate Synthetase, subunit A, domain 1"/>
    <property type="match status" value="1"/>
</dbReference>
<dbReference type="Gene3D" id="1.10.300.10">
    <property type="entry name" value="Adenylosuccinate Synthetase, subunit A, domain 2"/>
    <property type="match status" value="1"/>
</dbReference>
<dbReference type="Gene3D" id="3.90.170.10">
    <property type="entry name" value="Adenylosuccinate Synthetase, subunit A, domain 3"/>
    <property type="match status" value="1"/>
</dbReference>
<dbReference type="HAMAP" id="MF_00011">
    <property type="entry name" value="Adenylosucc_synth"/>
    <property type="match status" value="1"/>
</dbReference>
<dbReference type="InterPro" id="IPR018220">
    <property type="entry name" value="Adenylosuccin_syn_GTP-bd"/>
</dbReference>
<dbReference type="InterPro" id="IPR033128">
    <property type="entry name" value="Adenylosuccin_syn_Lys_AS"/>
</dbReference>
<dbReference type="InterPro" id="IPR042109">
    <property type="entry name" value="Adenylosuccinate_synth_dom1"/>
</dbReference>
<dbReference type="InterPro" id="IPR042110">
    <property type="entry name" value="Adenylosuccinate_synth_dom2"/>
</dbReference>
<dbReference type="InterPro" id="IPR042111">
    <property type="entry name" value="Adenylosuccinate_synth_dom3"/>
</dbReference>
<dbReference type="InterPro" id="IPR001114">
    <property type="entry name" value="Adenylosuccinate_synthetase"/>
</dbReference>
<dbReference type="InterPro" id="IPR027417">
    <property type="entry name" value="P-loop_NTPase"/>
</dbReference>
<dbReference type="NCBIfam" id="NF002223">
    <property type="entry name" value="PRK01117.1"/>
    <property type="match status" value="1"/>
</dbReference>
<dbReference type="NCBIfam" id="TIGR00184">
    <property type="entry name" value="purA"/>
    <property type="match status" value="1"/>
</dbReference>
<dbReference type="PANTHER" id="PTHR11846">
    <property type="entry name" value="ADENYLOSUCCINATE SYNTHETASE"/>
    <property type="match status" value="1"/>
</dbReference>
<dbReference type="PANTHER" id="PTHR11846:SF0">
    <property type="entry name" value="ADENYLOSUCCINATE SYNTHETASE"/>
    <property type="match status" value="1"/>
</dbReference>
<dbReference type="Pfam" id="PF00709">
    <property type="entry name" value="Adenylsucc_synt"/>
    <property type="match status" value="1"/>
</dbReference>
<dbReference type="SMART" id="SM00788">
    <property type="entry name" value="Adenylsucc_synt"/>
    <property type="match status" value="1"/>
</dbReference>
<dbReference type="SUPFAM" id="SSF52540">
    <property type="entry name" value="P-loop containing nucleoside triphosphate hydrolases"/>
    <property type="match status" value="1"/>
</dbReference>
<dbReference type="PROSITE" id="PS01266">
    <property type="entry name" value="ADENYLOSUCCIN_SYN_1"/>
    <property type="match status" value="1"/>
</dbReference>
<dbReference type="PROSITE" id="PS00513">
    <property type="entry name" value="ADENYLOSUCCIN_SYN_2"/>
    <property type="match status" value="1"/>
</dbReference>
<comment type="function">
    <text evidence="1">Plays an important role in the de novo pathway of purine nucleotide biosynthesis. Catalyzes the first committed step in the biosynthesis of AMP from IMP.</text>
</comment>
<comment type="catalytic activity">
    <reaction evidence="1">
        <text>IMP + L-aspartate + GTP = N(6)-(1,2-dicarboxyethyl)-AMP + GDP + phosphate + 2 H(+)</text>
        <dbReference type="Rhea" id="RHEA:15753"/>
        <dbReference type="ChEBI" id="CHEBI:15378"/>
        <dbReference type="ChEBI" id="CHEBI:29991"/>
        <dbReference type="ChEBI" id="CHEBI:37565"/>
        <dbReference type="ChEBI" id="CHEBI:43474"/>
        <dbReference type="ChEBI" id="CHEBI:57567"/>
        <dbReference type="ChEBI" id="CHEBI:58053"/>
        <dbReference type="ChEBI" id="CHEBI:58189"/>
        <dbReference type="EC" id="6.3.4.4"/>
    </reaction>
</comment>
<comment type="cofactor">
    <cofactor evidence="1">
        <name>Mg(2+)</name>
        <dbReference type="ChEBI" id="CHEBI:18420"/>
    </cofactor>
    <text evidence="1">Binds 1 Mg(2+) ion per subunit.</text>
</comment>
<comment type="pathway">
    <text evidence="1">Purine metabolism; AMP biosynthesis via de novo pathway; AMP from IMP: step 1/2.</text>
</comment>
<comment type="subunit">
    <text evidence="1">Homodimer.</text>
</comment>
<comment type="subcellular location">
    <subcellularLocation>
        <location evidence="1">Cytoplasm</location>
    </subcellularLocation>
</comment>
<comment type="similarity">
    <text evidence="1">Belongs to the adenylosuccinate synthetase family.</text>
</comment>
<proteinExistence type="inferred from homology"/>
<feature type="chain" id="PRO_0000224311" description="Adenylosuccinate synthetase">
    <location>
        <begin position="1"/>
        <end position="429"/>
    </location>
</feature>
<feature type="active site" description="Proton acceptor" evidence="1">
    <location>
        <position position="14"/>
    </location>
</feature>
<feature type="active site" description="Proton donor" evidence="1">
    <location>
        <position position="42"/>
    </location>
</feature>
<feature type="binding site" evidence="1">
    <location>
        <begin position="13"/>
        <end position="19"/>
    </location>
    <ligand>
        <name>GTP</name>
        <dbReference type="ChEBI" id="CHEBI:37565"/>
    </ligand>
</feature>
<feature type="binding site" description="in other chain" evidence="1">
    <location>
        <begin position="14"/>
        <end position="17"/>
    </location>
    <ligand>
        <name>IMP</name>
        <dbReference type="ChEBI" id="CHEBI:58053"/>
        <note>ligand shared between dimeric partners</note>
    </ligand>
</feature>
<feature type="binding site" evidence="1">
    <location>
        <position position="14"/>
    </location>
    <ligand>
        <name>Mg(2+)</name>
        <dbReference type="ChEBI" id="CHEBI:18420"/>
    </ligand>
</feature>
<feature type="binding site" description="in other chain" evidence="1">
    <location>
        <begin position="39"/>
        <end position="42"/>
    </location>
    <ligand>
        <name>IMP</name>
        <dbReference type="ChEBI" id="CHEBI:58053"/>
        <note>ligand shared between dimeric partners</note>
    </ligand>
</feature>
<feature type="binding site" evidence="1">
    <location>
        <begin position="41"/>
        <end position="43"/>
    </location>
    <ligand>
        <name>GTP</name>
        <dbReference type="ChEBI" id="CHEBI:37565"/>
    </ligand>
</feature>
<feature type="binding site" evidence="1">
    <location>
        <position position="41"/>
    </location>
    <ligand>
        <name>Mg(2+)</name>
        <dbReference type="ChEBI" id="CHEBI:18420"/>
    </ligand>
</feature>
<feature type="binding site" description="in other chain" evidence="1">
    <location>
        <position position="130"/>
    </location>
    <ligand>
        <name>IMP</name>
        <dbReference type="ChEBI" id="CHEBI:58053"/>
        <note>ligand shared between dimeric partners</note>
    </ligand>
</feature>
<feature type="binding site" evidence="1">
    <location>
        <position position="144"/>
    </location>
    <ligand>
        <name>IMP</name>
        <dbReference type="ChEBI" id="CHEBI:58053"/>
        <note>ligand shared between dimeric partners</note>
    </ligand>
</feature>
<feature type="binding site" description="in other chain" evidence="1">
    <location>
        <position position="224"/>
    </location>
    <ligand>
        <name>IMP</name>
        <dbReference type="ChEBI" id="CHEBI:58053"/>
        <note>ligand shared between dimeric partners</note>
    </ligand>
</feature>
<feature type="binding site" description="in other chain" evidence="1">
    <location>
        <position position="239"/>
    </location>
    <ligand>
        <name>IMP</name>
        <dbReference type="ChEBI" id="CHEBI:58053"/>
        <note>ligand shared between dimeric partners</note>
    </ligand>
</feature>
<feature type="binding site" evidence="1">
    <location>
        <begin position="299"/>
        <end position="305"/>
    </location>
    <ligand>
        <name>substrate</name>
    </ligand>
</feature>
<feature type="binding site" description="in other chain" evidence="1">
    <location>
        <position position="303"/>
    </location>
    <ligand>
        <name>IMP</name>
        <dbReference type="ChEBI" id="CHEBI:58053"/>
        <note>ligand shared between dimeric partners</note>
    </ligand>
</feature>
<feature type="binding site" evidence="1">
    <location>
        <position position="305"/>
    </location>
    <ligand>
        <name>GTP</name>
        <dbReference type="ChEBI" id="CHEBI:37565"/>
    </ligand>
</feature>
<feature type="binding site" evidence="1">
    <location>
        <begin position="331"/>
        <end position="333"/>
    </location>
    <ligand>
        <name>GTP</name>
        <dbReference type="ChEBI" id="CHEBI:37565"/>
    </ligand>
</feature>
<feature type="binding site" evidence="1">
    <location>
        <begin position="412"/>
        <end position="414"/>
    </location>
    <ligand>
        <name>GTP</name>
        <dbReference type="ChEBI" id="CHEBI:37565"/>
    </ligand>
</feature>
<evidence type="ECO:0000255" key="1">
    <source>
        <dbReference type="HAMAP-Rule" id="MF_00011"/>
    </source>
</evidence>
<gene>
    <name evidence="1" type="primary">purA</name>
    <name type="ordered locus">Psyc_0677</name>
</gene>
<reference key="1">
    <citation type="journal article" date="2010" name="Appl. Environ. Microbiol.">
        <title>The genome sequence of Psychrobacter arcticus 273-4, a psychroactive Siberian permafrost bacterium, reveals mechanisms for adaptation to low-temperature growth.</title>
        <authorList>
            <person name="Ayala-del-Rio H.L."/>
            <person name="Chain P.S."/>
            <person name="Grzymski J.J."/>
            <person name="Ponder M.A."/>
            <person name="Ivanova N."/>
            <person name="Bergholz P.W."/>
            <person name="Di Bartolo G."/>
            <person name="Hauser L."/>
            <person name="Land M."/>
            <person name="Bakermans C."/>
            <person name="Rodrigues D."/>
            <person name="Klappenbach J."/>
            <person name="Zarka D."/>
            <person name="Larimer F."/>
            <person name="Richardson P."/>
            <person name="Murray A."/>
            <person name="Thomashow M."/>
            <person name="Tiedje J.M."/>
        </authorList>
    </citation>
    <scope>NUCLEOTIDE SEQUENCE [LARGE SCALE GENOMIC DNA]</scope>
    <source>
        <strain>DSM 17307 / VKM B-2377 / 273-4</strain>
    </source>
</reference>
<protein>
    <recommendedName>
        <fullName evidence="1">Adenylosuccinate synthetase</fullName>
        <shortName evidence="1">AMPSase</shortName>
        <shortName evidence="1">AdSS</shortName>
        <ecNumber evidence="1">6.3.4.4</ecNumber>
    </recommendedName>
    <alternativeName>
        <fullName evidence="1">IMP--aspartate ligase</fullName>
    </alternativeName>
</protein>
<organism>
    <name type="scientific">Psychrobacter arcticus (strain DSM 17307 / VKM B-2377 / 273-4)</name>
    <dbReference type="NCBI Taxonomy" id="259536"/>
    <lineage>
        <taxon>Bacteria</taxon>
        <taxon>Pseudomonadati</taxon>
        <taxon>Pseudomonadota</taxon>
        <taxon>Gammaproteobacteria</taxon>
        <taxon>Moraxellales</taxon>
        <taxon>Moraxellaceae</taxon>
        <taxon>Psychrobacter</taxon>
    </lineage>
</organism>
<sequence length="429" mass="46934">MGKNVVVLGSQWGDEGKGKIVDLLTEKASAVARFQGGHNAGHTLVVDGKTTILHLIPSGILREGVTCFIGNGVVLAPDALLKEMKNLEDNNVPVRERLRISPNCPLIMPYHVALDQAREAKRGSGKIGTTGRGIGPAYEDKVARRAIKLADLFRDDLEEKLRNLIEYHNFQLTQYYKVEAIDFDETLKLCQEWKEAIRGMVTDVTEDLNQLRLAGKNLMFEGAQGTLLDIDHGTYPFVTSSSVTAGGVSTGTGIGPLYLDYVLGITKAYTTRVGSGPFPTELFDDVGAHLAKVGHEFGATTGRARRCGWFDAEALRRAVVLNSMSGICLTKLDVLDGLEELLIGVGYNLPETECAGAHDAEFYESVTPKYETLQGWSESTVGITNYDELPENAKKYIKRIEVLIGCPIDIISTGPDREETIVLRDPYDA</sequence>
<keyword id="KW-0963">Cytoplasm</keyword>
<keyword id="KW-0342">GTP-binding</keyword>
<keyword id="KW-0436">Ligase</keyword>
<keyword id="KW-0460">Magnesium</keyword>
<keyword id="KW-0479">Metal-binding</keyword>
<keyword id="KW-0547">Nucleotide-binding</keyword>
<keyword id="KW-0658">Purine biosynthesis</keyword>
<keyword id="KW-1185">Reference proteome</keyword>